<keyword id="KW-0903">Direct protein sequencing</keyword>
<keyword id="KW-0325">Glycoprotein</keyword>
<keyword id="KW-0446">Lipid-binding</keyword>
<keyword id="KW-1185">Reference proteome</keyword>
<keyword id="KW-0964">Secreted</keyword>
<keyword id="KW-0754">Steroid-binding</keyword>
<keyword id="KW-0813">Transport</keyword>
<reference key="1">
    <citation type="journal article" date="1990" name="Mol. Endocrinol.">
        <title>Rabbit corticosteroid-binding globulin: primary structure and biosynthesis during pregnancy.</title>
        <authorList>
            <person name="Seralini G.-E."/>
            <person name="Smith C.L."/>
            <person name="Hammond G.L."/>
        </authorList>
    </citation>
    <scope>NUCLEOTIDE SEQUENCE OF 15-383</scope>
    <scope>PROTEIN SEQUENCE OF 1-24</scope>
    <source>
        <tissue>Liver</tissue>
    </source>
</reference>
<dbReference type="PIR" id="A36117">
    <property type="entry name" value="A36117"/>
</dbReference>
<dbReference type="SMR" id="P23775"/>
<dbReference type="FunCoup" id="P23775">
    <property type="interactions" value="36"/>
</dbReference>
<dbReference type="STRING" id="9986.ENSOCUP00000014027"/>
<dbReference type="GlyCosmos" id="P23775">
    <property type="glycosylation" value="4 sites, No reported glycans"/>
</dbReference>
<dbReference type="PaxDb" id="9986-ENSOCUP00000014027"/>
<dbReference type="eggNOG" id="KOG2392">
    <property type="taxonomic scope" value="Eukaryota"/>
</dbReference>
<dbReference type="InParanoid" id="P23775"/>
<dbReference type="Proteomes" id="UP000001811">
    <property type="component" value="Unplaced"/>
</dbReference>
<dbReference type="GO" id="GO:0005615">
    <property type="term" value="C:extracellular space"/>
    <property type="evidence" value="ECO:0007669"/>
    <property type="project" value="InterPro"/>
</dbReference>
<dbReference type="GO" id="GO:0004867">
    <property type="term" value="F:serine-type endopeptidase inhibitor activity"/>
    <property type="evidence" value="ECO:0007669"/>
    <property type="project" value="InterPro"/>
</dbReference>
<dbReference type="GO" id="GO:0005496">
    <property type="term" value="F:steroid binding"/>
    <property type="evidence" value="ECO:0000250"/>
    <property type="project" value="UniProtKB"/>
</dbReference>
<dbReference type="CDD" id="cd19554">
    <property type="entry name" value="serpinA6_CBG"/>
    <property type="match status" value="1"/>
</dbReference>
<dbReference type="FunFam" id="3.30.497.10:FF:000001">
    <property type="entry name" value="Serine protease inhibitor"/>
    <property type="match status" value="1"/>
</dbReference>
<dbReference type="FunFam" id="2.30.39.10:FF:000002">
    <property type="entry name" value="Serpin family D member 1"/>
    <property type="match status" value="1"/>
</dbReference>
<dbReference type="Gene3D" id="2.30.39.10">
    <property type="entry name" value="Alpha-1-antitrypsin, domain 1"/>
    <property type="match status" value="1"/>
</dbReference>
<dbReference type="Gene3D" id="3.30.497.10">
    <property type="entry name" value="Antithrombin, subunit I, domain 2"/>
    <property type="match status" value="1"/>
</dbReference>
<dbReference type="InterPro" id="IPR023795">
    <property type="entry name" value="Serpin_CS"/>
</dbReference>
<dbReference type="InterPro" id="IPR023796">
    <property type="entry name" value="Serpin_dom"/>
</dbReference>
<dbReference type="InterPro" id="IPR000215">
    <property type="entry name" value="Serpin_fam"/>
</dbReference>
<dbReference type="InterPro" id="IPR036186">
    <property type="entry name" value="Serpin_sf"/>
</dbReference>
<dbReference type="InterPro" id="IPR042178">
    <property type="entry name" value="Serpin_sf_1"/>
</dbReference>
<dbReference type="InterPro" id="IPR042185">
    <property type="entry name" value="Serpin_sf_2"/>
</dbReference>
<dbReference type="PANTHER" id="PTHR11461:SF34">
    <property type="entry name" value="CORTICOSTEROID-BINDING GLOBULIN"/>
    <property type="match status" value="1"/>
</dbReference>
<dbReference type="PANTHER" id="PTHR11461">
    <property type="entry name" value="SERINE PROTEASE INHIBITOR, SERPIN"/>
    <property type="match status" value="1"/>
</dbReference>
<dbReference type="Pfam" id="PF00079">
    <property type="entry name" value="Serpin"/>
    <property type="match status" value="1"/>
</dbReference>
<dbReference type="SMART" id="SM00093">
    <property type="entry name" value="SERPIN"/>
    <property type="match status" value="1"/>
</dbReference>
<dbReference type="SUPFAM" id="SSF56574">
    <property type="entry name" value="Serpins"/>
    <property type="match status" value="1"/>
</dbReference>
<dbReference type="PROSITE" id="PS00284">
    <property type="entry name" value="SERPIN"/>
    <property type="match status" value="1"/>
</dbReference>
<evidence type="ECO:0000250" key="1"/>
<evidence type="ECO:0000255" key="2"/>
<evidence type="ECO:0000305" key="3"/>
<proteinExistence type="evidence at protein level"/>
<feature type="chain" id="PRO_0000094099" description="Corticosteroid-binding globulin">
    <location>
        <begin position="1"/>
        <end position="383"/>
    </location>
</feature>
<feature type="binding site" evidence="1">
    <location>
        <position position="232"/>
    </location>
    <ligand>
        <name>cortisol</name>
        <dbReference type="ChEBI" id="CHEBI:17650"/>
    </ligand>
</feature>
<feature type="binding site" evidence="1">
    <location>
        <position position="264"/>
    </location>
    <ligand>
        <name>cortisol</name>
        <dbReference type="ChEBI" id="CHEBI:17650"/>
    </ligand>
</feature>
<feature type="binding site" evidence="1">
    <location>
        <position position="371"/>
    </location>
    <ligand>
        <name>cortisol</name>
        <dbReference type="ChEBI" id="CHEBI:17650"/>
    </ligand>
</feature>
<feature type="site" description="Conserved cysteine within steroid binding domain">
    <location>
        <position position="228"/>
    </location>
</feature>
<feature type="glycosylation site" description="N-linked (GlcNAc...) asparagine" evidence="2">
    <location>
        <position position="74"/>
    </location>
</feature>
<feature type="glycosylation site" description="N-linked (GlcNAc...) asparagine" evidence="2">
    <location>
        <position position="154"/>
    </location>
</feature>
<feature type="glycosylation site" description="N-linked (GlcNAc...) asparagine" evidence="2">
    <location>
        <position position="238"/>
    </location>
</feature>
<feature type="glycosylation site" description="N-linked (GlcNAc...) asparagine" evidence="2">
    <location>
        <position position="308"/>
    </location>
</feature>
<accession>P23775</accession>
<protein>
    <recommendedName>
        <fullName>Corticosteroid-binding globulin</fullName>
        <shortName>CBG</shortName>
    </recommendedName>
    <alternativeName>
        <fullName>Serpin A6</fullName>
    </alternativeName>
    <alternativeName>
        <fullName>Transcortin</fullName>
    </alternativeName>
</protein>
<comment type="function">
    <text>Major transport protein for glucocorticoids and progestins in the blood of almost all vertebrate species.</text>
</comment>
<comment type="subcellular location">
    <subcellularLocation>
        <location>Secreted</location>
    </subcellularLocation>
</comment>
<comment type="tissue specificity">
    <text>Produced and secreted by hepatocytes, but has also been identified in a number of glycocorticoid responsive cells (it is found in maternal lung, spleen, and ovary and fetal kidney).</text>
</comment>
<comment type="domain">
    <text evidence="1">Proteolytic cleavage leads to an important conformation change. This reduces the affinity for steroids (By similarity).</text>
</comment>
<comment type="similarity">
    <text evidence="3">Belongs to the serpin family.</text>
</comment>
<organism>
    <name type="scientific">Oryctolagus cuniculus</name>
    <name type="common">Rabbit</name>
    <dbReference type="NCBI Taxonomy" id="9986"/>
    <lineage>
        <taxon>Eukaryota</taxon>
        <taxon>Metazoa</taxon>
        <taxon>Chordata</taxon>
        <taxon>Craniata</taxon>
        <taxon>Vertebrata</taxon>
        <taxon>Euteleostomi</taxon>
        <taxon>Mammalia</taxon>
        <taxon>Eutheria</taxon>
        <taxon>Euarchontoglires</taxon>
        <taxon>Glires</taxon>
        <taxon>Lagomorpha</taxon>
        <taxon>Leporidae</taxon>
        <taxon>Oryctolagus</taxon>
    </lineage>
</organism>
<name>CBG_RABIT</name>
<sequence>ADPPGGDISTRSPPRGLAPANVDFAFSLYRQLVSSAPDRNICISPVSVSMALAMLSLGASGHTRTQLLQGLGFNLTEMPEAEIHQGFQYLHHLLGESDTSLEMTMGNALFLDHSLELLESFSADIRRYYESEALATDFQDWPRACRQINEYIENKTQGKIADLFLGLENPAILILVNYIFFKGTWAHPFDPQSTEEKSFYVDDTTTVMVPMMFQSSTVKYLHDPVLPCRLVQLDYVGNGTAFFILPDKGKVDTVIAALSRDTIQRWSKSLTYRLVHLYIPKASISGAYELRGALAAMGIADLFTNQANFSSISQEGPLKVSKVLHKAVLQLDEHGGVEVAATGGPLQLVSEPLTLNFNRPFLILIFDDFTWSSLFLGKVVIPA</sequence>
<gene>
    <name type="primary">SERPINA6</name>
    <name type="synonym">CBG</name>
</gene>